<organism>
    <name type="scientific">Rhizobium leguminosarum bv. trifolii (strain WSM2304)</name>
    <dbReference type="NCBI Taxonomy" id="395492"/>
    <lineage>
        <taxon>Bacteria</taxon>
        <taxon>Pseudomonadati</taxon>
        <taxon>Pseudomonadota</taxon>
        <taxon>Alphaproteobacteria</taxon>
        <taxon>Hyphomicrobiales</taxon>
        <taxon>Rhizobiaceae</taxon>
        <taxon>Rhizobium/Agrobacterium group</taxon>
        <taxon>Rhizobium</taxon>
    </lineage>
</organism>
<accession>B5ZWJ4</accession>
<reference key="1">
    <citation type="journal article" date="2010" name="Stand. Genomic Sci.">
        <title>Complete genome sequence of Rhizobium leguminosarum bv trifolii strain WSM2304, an effective microsymbiont of the South American clover Trifolium polymorphum.</title>
        <authorList>
            <person name="Reeve W."/>
            <person name="O'Hara G."/>
            <person name="Chain P."/>
            <person name="Ardley J."/>
            <person name="Brau L."/>
            <person name="Nandesena K."/>
            <person name="Tiwari R."/>
            <person name="Malfatti S."/>
            <person name="Kiss H."/>
            <person name="Lapidus A."/>
            <person name="Copeland A."/>
            <person name="Nolan M."/>
            <person name="Land M."/>
            <person name="Ivanova N."/>
            <person name="Mavromatis K."/>
            <person name="Markowitz V."/>
            <person name="Kyrpides N."/>
            <person name="Melino V."/>
            <person name="Denton M."/>
            <person name="Yates R."/>
            <person name="Howieson J."/>
        </authorList>
    </citation>
    <scope>NUCLEOTIDE SEQUENCE [LARGE SCALE GENOMIC DNA]</scope>
    <source>
        <strain>WSM2304</strain>
    </source>
</reference>
<protein>
    <recommendedName>
        <fullName evidence="1">UDP-N-acetylglucosamine--N-acetylmuramyl-(pentapeptide) pyrophosphoryl-undecaprenol N-acetylglucosamine transferase</fullName>
        <ecNumber evidence="1">2.4.1.227</ecNumber>
    </recommendedName>
    <alternativeName>
        <fullName evidence="1">Undecaprenyl-PP-MurNAc-pentapeptide-UDPGlcNAc GlcNAc transferase</fullName>
    </alternativeName>
</protein>
<proteinExistence type="inferred from homology"/>
<feature type="chain" id="PRO_1000090464" description="UDP-N-acetylglucosamine--N-acetylmuramyl-(pentapeptide) pyrophosphoryl-undecaprenol N-acetylglucosamine transferase">
    <location>
        <begin position="1"/>
        <end position="374"/>
    </location>
</feature>
<feature type="binding site" evidence="1">
    <location>
        <begin position="13"/>
        <end position="15"/>
    </location>
    <ligand>
        <name>UDP-N-acetyl-alpha-D-glucosamine</name>
        <dbReference type="ChEBI" id="CHEBI:57705"/>
    </ligand>
</feature>
<feature type="binding site" evidence="1">
    <location>
        <position position="124"/>
    </location>
    <ligand>
        <name>UDP-N-acetyl-alpha-D-glucosamine</name>
        <dbReference type="ChEBI" id="CHEBI:57705"/>
    </ligand>
</feature>
<feature type="binding site" evidence="1">
    <location>
        <position position="165"/>
    </location>
    <ligand>
        <name>UDP-N-acetyl-alpha-D-glucosamine</name>
        <dbReference type="ChEBI" id="CHEBI:57705"/>
    </ligand>
</feature>
<feature type="binding site" evidence="1">
    <location>
        <position position="193"/>
    </location>
    <ligand>
        <name>UDP-N-acetyl-alpha-D-glucosamine</name>
        <dbReference type="ChEBI" id="CHEBI:57705"/>
    </ligand>
</feature>
<feature type="binding site" evidence="1">
    <location>
        <position position="294"/>
    </location>
    <ligand>
        <name>UDP-N-acetyl-alpha-D-glucosamine</name>
        <dbReference type="ChEBI" id="CHEBI:57705"/>
    </ligand>
</feature>
<sequence>MSKGIVLLAAGGTGGHVFPAEALAFKLKERGYSVHLVTDSRAERYAGKFPAEEIHVVPSATIGSKNPVAVARSLWTLWSGMRAAKKLIQRLKPVIVVGFGGYPTVPPLLAATRLGVPTMIHEQNAVMGRANKALATRVQGIAGGFLPEGGGAFPEKTVTTGNPVRPAIIAAAEVPYTPSHPGEAFNLVVFGGSQGAQYFSKALPTAISLLDDALRLRLRITQQVRPEDMEMVGGCVAKLEMGADIAPFFTDMAERLAKAHLVICRSGASTVSEISVIGRPAVLVPYPHALDHDQAANAAALAATGGAKVIAQSELSPEKIAAILTAVMNDPEKLSHMAAAAKLAGKPDAANLLADMVEAIAAGRTIAELKRTRA</sequence>
<dbReference type="EC" id="2.4.1.227" evidence="1"/>
<dbReference type="EMBL" id="CP001191">
    <property type="protein sequence ID" value="ACI55865.1"/>
    <property type="molecule type" value="Genomic_DNA"/>
</dbReference>
<dbReference type="RefSeq" id="WP_012558370.1">
    <property type="nucleotide sequence ID" value="NC_011369.1"/>
</dbReference>
<dbReference type="SMR" id="B5ZWJ4"/>
<dbReference type="STRING" id="395492.Rleg2_2594"/>
<dbReference type="CAZy" id="GT28">
    <property type="family name" value="Glycosyltransferase Family 28"/>
</dbReference>
<dbReference type="KEGG" id="rlt:Rleg2_2594"/>
<dbReference type="eggNOG" id="COG0707">
    <property type="taxonomic scope" value="Bacteria"/>
</dbReference>
<dbReference type="HOGENOM" id="CLU_037404_2_1_5"/>
<dbReference type="UniPathway" id="UPA00219"/>
<dbReference type="Proteomes" id="UP000008330">
    <property type="component" value="Chromosome"/>
</dbReference>
<dbReference type="GO" id="GO:0005886">
    <property type="term" value="C:plasma membrane"/>
    <property type="evidence" value="ECO:0007669"/>
    <property type="project" value="UniProtKB-SubCell"/>
</dbReference>
<dbReference type="GO" id="GO:0051991">
    <property type="term" value="F:UDP-N-acetyl-D-glucosamine:N-acetylmuramoyl-L-alanyl-D-glutamyl-meso-2,6-diaminopimelyl-D-alanyl-D-alanine-diphosphoundecaprenol 4-beta-N-acetylglucosaminlytransferase activity"/>
    <property type="evidence" value="ECO:0007669"/>
    <property type="project" value="RHEA"/>
</dbReference>
<dbReference type="GO" id="GO:0050511">
    <property type="term" value="F:undecaprenyldiphospho-muramoylpentapeptide beta-N-acetylglucosaminyltransferase activity"/>
    <property type="evidence" value="ECO:0007669"/>
    <property type="project" value="UniProtKB-UniRule"/>
</dbReference>
<dbReference type="GO" id="GO:0005975">
    <property type="term" value="P:carbohydrate metabolic process"/>
    <property type="evidence" value="ECO:0007669"/>
    <property type="project" value="InterPro"/>
</dbReference>
<dbReference type="GO" id="GO:0051301">
    <property type="term" value="P:cell division"/>
    <property type="evidence" value="ECO:0007669"/>
    <property type="project" value="UniProtKB-KW"/>
</dbReference>
<dbReference type="GO" id="GO:0071555">
    <property type="term" value="P:cell wall organization"/>
    <property type="evidence" value="ECO:0007669"/>
    <property type="project" value="UniProtKB-KW"/>
</dbReference>
<dbReference type="GO" id="GO:0030259">
    <property type="term" value="P:lipid glycosylation"/>
    <property type="evidence" value="ECO:0007669"/>
    <property type="project" value="UniProtKB-UniRule"/>
</dbReference>
<dbReference type="GO" id="GO:0009252">
    <property type="term" value="P:peptidoglycan biosynthetic process"/>
    <property type="evidence" value="ECO:0007669"/>
    <property type="project" value="UniProtKB-UniRule"/>
</dbReference>
<dbReference type="GO" id="GO:0008360">
    <property type="term" value="P:regulation of cell shape"/>
    <property type="evidence" value="ECO:0007669"/>
    <property type="project" value="UniProtKB-KW"/>
</dbReference>
<dbReference type="CDD" id="cd03785">
    <property type="entry name" value="GT28_MurG"/>
    <property type="match status" value="1"/>
</dbReference>
<dbReference type="Gene3D" id="3.40.50.2000">
    <property type="entry name" value="Glycogen Phosphorylase B"/>
    <property type="match status" value="2"/>
</dbReference>
<dbReference type="HAMAP" id="MF_00033">
    <property type="entry name" value="MurG"/>
    <property type="match status" value="1"/>
</dbReference>
<dbReference type="InterPro" id="IPR006009">
    <property type="entry name" value="GlcNAc_MurG"/>
</dbReference>
<dbReference type="InterPro" id="IPR007235">
    <property type="entry name" value="Glyco_trans_28_C"/>
</dbReference>
<dbReference type="InterPro" id="IPR004276">
    <property type="entry name" value="GlycoTrans_28_N"/>
</dbReference>
<dbReference type="NCBIfam" id="TIGR01133">
    <property type="entry name" value="murG"/>
    <property type="match status" value="1"/>
</dbReference>
<dbReference type="PANTHER" id="PTHR21015:SF22">
    <property type="entry name" value="GLYCOSYLTRANSFERASE"/>
    <property type="match status" value="1"/>
</dbReference>
<dbReference type="PANTHER" id="PTHR21015">
    <property type="entry name" value="UDP-N-ACETYLGLUCOSAMINE--N-ACETYLMURAMYL-(PENTAPEPTIDE) PYROPHOSPHORYL-UNDECAPRENOL N-ACETYLGLUCOSAMINE TRANSFERASE 1"/>
    <property type="match status" value="1"/>
</dbReference>
<dbReference type="Pfam" id="PF04101">
    <property type="entry name" value="Glyco_tran_28_C"/>
    <property type="match status" value="1"/>
</dbReference>
<dbReference type="Pfam" id="PF03033">
    <property type="entry name" value="Glyco_transf_28"/>
    <property type="match status" value="1"/>
</dbReference>
<dbReference type="SUPFAM" id="SSF53756">
    <property type="entry name" value="UDP-Glycosyltransferase/glycogen phosphorylase"/>
    <property type="match status" value="1"/>
</dbReference>
<comment type="function">
    <text evidence="1">Cell wall formation. Catalyzes the transfer of a GlcNAc subunit on undecaprenyl-pyrophosphoryl-MurNAc-pentapeptide (lipid intermediate I) to form undecaprenyl-pyrophosphoryl-MurNAc-(pentapeptide)GlcNAc (lipid intermediate II).</text>
</comment>
<comment type="catalytic activity">
    <reaction evidence="1">
        <text>di-trans,octa-cis-undecaprenyl diphospho-N-acetyl-alpha-D-muramoyl-L-alanyl-D-glutamyl-meso-2,6-diaminopimeloyl-D-alanyl-D-alanine + UDP-N-acetyl-alpha-D-glucosamine = di-trans,octa-cis-undecaprenyl diphospho-[N-acetyl-alpha-D-glucosaminyl-(1-&gt;4)]-N-acetyl-alpha-D-muramoyl-L-alanyl-D-glutamyl-meso-2,6-diaminopimeloyl-D-alanyl-D-alanine + UDP + H(+)</text>
        <dbReference type="Rhea" id="RHEA:31227"/>
        <dbReference type="ChEBI" id="CHEBI:15378"/>
        <dbReference type="ChEBI" id="CHEBI:57705"/>
        <dbReference type="ChEBI" id="CHEBI:58223"/>
        <dbReference type="ChEBI" id="CHEBI:61387"/>
        <dbReference type="ChEBI" id="CHEBI:61388"/>
        <dbReference type="EC" id="2.4.1.227"/>
    </reaction>
</comment>
<comment type="pathway">
    <text evidence="1">Cell wall biogenesis; peptidoglycan biosynthesis.</text>
</comment>
<comment type="subcellular location">
    <subcellularLocation>
        <location evidence="1">Cell inner membrane</location>
        <topology evidence="1">Peripheral membrane protein</topology>
        <orientation evidence="1">Cytoplasmic side</orientation>
    </subcellularLocation>
</comment>
<comment type="similarity">
    <text evidence="1">Belongs to the glycosyltransferase 28 family. MurG subfamily.</text>
</comment>
<evidence type="ECO:0000255" key="1">
    <source>
        <dbReference type="HAMAP-Rule" id="MF_00033"/>
    </source>
</evidence>
<name>MURG_RHILW</name>
<keyword id="KW-0131">Cell cycle</keyword>
<keyword id="KW-0132">Cell division</keyword>
<keyword id="KW-0997">Cell inner membrane</keyword>
<keyword id="KW-1003">Cell membrane</keyword>
<keyword id="KW-0133">Cell shape</keyword>
<keyword id="KW-0961">Cell wall biogenesis/degradation</keyword>
<keyword id="KW-0328">Glycosyltransferase</keyword>
<keyword id="KW-0472">Membrane</keyword>
<keyword id="KW-0573">Peptidoglycan synthesis</keyword>
<keyword id="KW-1185">Reference proteome</keyword>
<keyword id="KW-0808">Transferase</keyword>
<gene>
    <name evidence="1" type="primary">murG</name>
    <name type="ordered locus">Rleg2_2594</name>
</gene>